<gene>
    <name type="ordered locus">23</name>
</gene>
<dbReference type="EMBL" id="AY665713">
    <property type="protein sequence ID" value="AAT67280.1"/>
    <property type="molecule type" value="Genomic_DNA"/>
</dbReference>
<dbReference type="PIR" id="F36797">
    <property type="entry name" value="WZBEB5"/>
</dbReference>
<dbReference type="SMR" id="P28956"/>
<dbReference type="KEGG" id="vg:1487542"/>
<dbReference type="Proteomes" id="UP000001189">
    <property type="component" value="Segment"/>
</dbReference>
<dbReference type="GO" id="GO:0044177">
    <property type="term" value="C:host cell Golgi apparatus"/>
    <property type="evidence" value="ECO:0007669"/>
    <property type="project" value="UniProtKB-SubCell"/>
</dbReference>
<dbReference type="GO" id="GO:0042025">
    <property type="term" value="C:host cell nucleus"/>
    <property type="evidence" value="ECO:0007669"/>
    <property type="project" value="UniProtKB-SubCell"/>
</dbReference>
<dbReference type="GO" id="GO:0019033">
    <property type="term" value="C:viral tegument"/>
    <property type="evidence" value="ECO:0007669"/>
    <property type="project" value="UniProtKB-SubCell"/>
</dbReference>
<dbReference type="GO" id="GO:0019068">
    <property type="term" value="P:virion assembly"/>
    <property type="evidence" value="ECO:0007669"/>
    <property type="project" value="InterPro"/>
</dbReference>
<dbReference type="HAMAP" id="MF_04043">
    <property type="entry name" value="HSV_ITP"/>
    <property type="match status" value="1"/>
</dbReference>
<dbReference type="InterPro" id="IPR005655">
    <property type="entry name" value="Herpes_UL37"/>
</dbReference>
<dbReference type="InterPro" id="IPR034738">
    <property type="entry name" value="HSV_ITP"/>
</dbReference>
<dbReference type="Pfam" id="PF03970">
    <property type="entry name" value="Herpes_UL37_1"/>
    <property type="match status" value="1"/>
</dbReference>
<name>ITP_EHV1B</name>
<keyword id="KW-1035">Host cytoplasm</keyword>
<keyword id="KW-1040">Host Golgi apparatus</keyword>
<keyword id="KW-1048">Host nucleus</keyword>
<keyword id="KW-1185">Reference proteome</keyword>
<keyword id="KW-0946">Virion</keyword>
<keyword id="KW-0920">Virion tegument</keyword>
<feature type="chain" id="PRO_0000116045" description="Inner tegument protein">
    <location>
        <begin position="1"/>
        <end position="1020"/>
    </location>
</feature>
<feature type="region of interest" description="Interaction with large tegument protein" evidence="1">
    <location>
        <begin position="539"/>
        <end position="1020"/>
    </location>
</feature>
<comment type="function">
    <text evidence="1">Plays an essential role in cytoplasmic secondary envelopment during viral egress. Interacts with the capsid via the large tegument protein/LTP and participates in its transport to the host trans-Golgi network (TGN) where secondary envelopment occurs. Modulates tegumentation and capsid accumulation at the viral assembly complex.</text>
</comment>
<comment type="subunit">
    <text evidence="1">Interacts (via C-terminus) with the large tegument protein/LTP (via N-terminus).</text>
</comment>
<comment type="subcellular location">
    <subcellularLocation>
        <location evidence="1">Virion tegument</location>
    </subcellularLocation>
    <subcellularLocation>
        <location evidence="1">Host cytoplasm</location>
    </subcellularLocation>
    <subcellularLocation>
        <location evidence="1">Host nucleus</location>
    </subcellularLocation>
    <subcellularLocation>
        <location evidence="1">Host Golgi apparatus</location>
        <location evidence="1">Host trans-Golgi network</location>
    </subcellularLocation>
</comment>
<comment type="similarity">
    <text evidence="1">Belongs to the herpesviridae inner tegument protein family.</text>
</comment>
<organism>
    <name type="scientific">Equine herpesvirus 1 (strain Ab4p)</name>
    <name type="common">EHV-1</name>
    <name type="synonym">Equine abortion virus</name>
    <dbReference type="NCBI Taxonomy" id="31520"/>
    <lineage>
        <taxon>Viruses</taxon>
        <taxon>Duplodnaviria</taxon>
        <taxon>Heunggongvirae</taxon>
        <taxon>Peploviricota</taxon>
        <taxon>Herviviricetes</taxon>
        <taxon>Herpesvirales</taxon>
        <taxon>Orthoherpesviridae</taxon>
        <taxon>Alphaherpesvirinae</taxon>
        <taxon>Varicellovirus</taxon>
        <taxon>Varicellovirus equidalpha1</taxon>
        <taxon>Equid alphaherpesvirus 1</taxon>
    </lineage>
</organism>
<reference key="1">
    <citation type="journal article" date="1992" name="Virology">
        <title>The DNA sequence of equine herpesvirus-1.</title>
        <authorList>
            <person name="Telford E.A.R."/>
            <person name="Watson M.S."/>
            <person name="McBride K."/>
            <person name="Davison A.J."/>
        </authorList>
    </citation>
    <scope>NUCLEOTIDE SEQUENCE [LARGE SCALE GENOMIC DNA]</scope>
</reference>
<accession>P28956</accession>
<accession>Q6S6P8</accession>
<proteinExistence type="inferred from homology"/>
<sequence length="1020" mass="111611">MAREHGSMRALVNSLAGLLGETDTEVPSLEPAMLMVLKSSISEFFLSTDTVSVDEAAELFPRLQFLACRAYAASHTPDAAMLAENLAGLVLWRIHQNWTDREMEAVDQMFVLLEIMNGESGVYMLSNNNLRISAKYGPSNMHLIVSTWLDTFRNVMSVAAKSTPDSLFNSKRMESIEEFSKPLVHAKFNLIYDMPFVQEGLRIVAKKINWILPFGLMVKGYKDMSMAPLTRALFLLSLVDSYFPKGTATEGSMKALTAYFRELVRTIDNSAFVPITEVNATPRTAYEVRVSSAIVHQNPYVTDTKAGMVAERVRTDAEILTSGALLSSGALSAHATAVAKLLSSNEPDDVSSRARARVAEHASNTWETIQASTTPTQVVEALVTAGFTSTHCGILERVVVDYFTRLRSTANSGPGRNDSLDYAQQVVGCVAIVGGVVFRLLLSYGFGLDYIRDYTTTISTLEPVYNELLSALGLADKGVEQTLKRSMAPRPYMNYISAARAALDDELLIVEKRTTGPGTHSAARESLLTWFDFRARDRWGVRIPDRDTTSTQVLAPITASLYSDDDLIAAASKLSFDALDAPPTQIIDDPSFAPYMLATVVLDAFNAILTSRFSADSVSQALRVLSWARDYGAGSIANVDGYRTKLTAIIASVSPFLQKDAPTPTMAHANNLEALLGELHSVVVAAIALIPERARMPVPERPSVKTSTFLAGLFLTAVYKRLETLVGHTAELTNNILGTASGIVSSIVTLNRFFNCRIMPVMGHYAVLIYPQSAQSAPFGRWRLVDVVDAVGSIYNEVSDLRADLRADVVTLKGDITSAAEALQECEALAVKTEGTRFGKLFNSLLTRHTQLARAQRGLAIRAGKLLGGSEAPGLKHVNTFLQRWGAISVMYQKATSGSTPEVNITSLANTLRHVWDEVQQERKATPPSRKFSNRDLGLAVERLMGGYPEVLDDDSNSTALTPKFNVDSWNSVNMDALRKRVTMPANIDSIRGNDSLATREYLKKEDLLAEIDAIFNNTK</sequence>
<evidence type="ECO:0000255" key="1">
    <source>
        <dbReference type="HAMAP-Rule" id="MF_04043"/>
    </source>
</evidence>
<organismHost>
    <name type="scientific">Equus caballus</name>
    <name type="common">Horse</name>
    <dbReference type="NCBI Taxonomy" id="9796"/>
</organismHost>
<protein>
    <recommendedName>
        <fullName evidence="1">Inner tegument protein</fullName>
    </recommendedName>
</protein>